<sequence length="809" mass="89648">MKIPLKWLKEYLPTDMSPAELAERMTMAGTEVTVLNSRKDKWPNVYVGQIMEVNRHPNADRLVLVKVDWGQGQETVVTGAPNCKAGDKVVFARTGAVLIDGHNGKEMVLKPAVLRGVESCGMVCSERELGLSDEHEGILILPADAPVGMLASEYLGEIILDLELTPNRGDLMCVTGVARELGALIDRLPSISTPDFKATGKDIKDKINIEIKNTKLCTRYTASLIEGIKIGESPDWLKERLIACGMRPINNVVDATNYVMLEFGQPLHSFDYDQIKSKHIIVRPAAEGEVLTTLDGVERKLSPDMLLITEPDKIIALAGVMGGENTEVTEKTASVLLESATFDKHSIRRTAKALKLQSEASARFEKGLSFELAPVALKRATQLILEIAGGQAASGLMDVMPVKKDRNSVVLSLSKVNRVLGLEGEKFDSCKIAKRLGFAWMPEYVPGMEEFGYGSVDDKMRFFPGYWRMDIESDIDMIEEVARIAGYDTIPCLPLDKAIPKIETPPLPGIKRFLRQILSGYGFQELISYSFTSREMLSRVFSGAEPECLAISNPMSSEQEVMRTSLRPALYASLAANRRFEKNGLRLYELGRIYLPKENNKQDEPEMLCALIAGSASEAWWQRNTAGFDFFDAKGIVESLVSRLGIAADFAVSDEPGLTPGYQAGILVGDMPVGVLGQLSPQTADKFGITEPVYMFEINLSKLITRATVRRKFTQINRFPSVERDLALVLDRSITNRQVTDIISEFDLVKNVELFDMYQGKQVAEDKKSLAYHLLFQSDTHTLKDADVDSVMNQILKRLNTETGAVLRS</sequence>
<dbReference type="EC" id="6.1.1.20" evidence="1"/>
<dbReference type="EMBL" id="CP000027">
    <property type="protein sequence ID" value="AAW40364.1"/>
    <property type="molecule type" value="Genomic_DNA"/>
</dbReference>
<dbReference type="RefSeq" id="WP_010936145.1">
    <property type="nucleotide sequence ID" value="NC_002936.3"/>
</dbReference>
<dbReference type="SMR" id="Q3Z9I7"/>
<dbReference type="FunCoup" id="Q3Z9I7">
    <property type="interactions" value="341"/>
</dbReference>
<dbReference type="STRING" id="243164.DET0366"/>
<dbReference type="GeneID" id="3230328"/>
<dbReference type="KEGG" id="det:DET0366"/>
<dbReference type="PATRIC" id="fig|243164.10.peg.346"/>
<dbReference type="eggNOG" id="COG0072">
    <property type="taxonomic scope" value="Bacteria"/>
</dbReference>
<dbReference type="eggNOG" id="COG0073">
    <property type="taxonomic scope" value="Bacteria"/>
</dbReference>
<dbReference type="HOGENOM" id="CLU_016891_0_0_0"/>
<dbReference type="InParanoid" id="Q3Z9I7"/>
<dbReference type="Proteomes" id="UP000008289">
    <property type="component" value="Chromosome"/>
</dbReference>
<dbReference type="GO" id="GO:0009328">
    <property type="term" value="C:phenylalanine-tRNA ligase complex"/>
    <property type="evidence" value="ECO:0007669"/>
    <property type="project" value="TreeGrafter"/>
</dbReference>
<dbReference type="GO" id="GO:0005524">
    <property type="term" value="F:ATP binding"/>
    <property type="evidence" value="ECO:0007669"/>
    <property type="project" value="UniProtKB-UniRule"/>
</dbReference>
<dbReference type="GO" id="GO:0000287">
    <property type="term" value="F:magnesium ion binding"/>
    <property type="evidence" value="ECO:0007669"/>
    <property type="project" value="UniProtKB-UniRule"/>
</dbReference>
<dbReference type="GO" id="GO:0004826">
    <property type="term" value="F:phenylalanine-tRNA ligase activity"/>
    <property type="evidence" value="ECO:0007669"/>
    <property type="project" value="UniProtKB-UniRule"/>
</dbReference>
<dbReference type="GO" id="GO:0000049">
    <property type="term" value="F:tRNA binding"/>
    <property type="evidence" value="ECO:0007669"/>
    <property type="project" value="UniProtKB-KW"/>
</dbReference>
<dbReference type="GO" id="GO:0006432">
    <property type="term" value="P:phenylalanyl-tRNA aminoacylation"/>
    <property type="evidence" value="ECO:0007669"/>
    <property type="project" value="UniProtKB-UniRule"/>
</dbReference>
<dbReference type="CDD" id="cd00769">
    <property type="entry name" value="PheRS_beta_core"/>
    <property type="match status" value="1"/>
</dbReference>
<dbReference type="CDD" id="cd02796">
    <property type="entry name" value="tRNA_bind_bactPheRS"/>
    <property type="match status" value="1"/>
</dbReference>
<dbReference type="FunFam" id="2.40.50.140:FF:000045">
    <property type="entry name" value="Phenylalanine--tRNA ligase beta subunit"/>
    <property type="match status" value="1"/>
</dbReference>
<dbReference type="FunFam" id="3.30.70.380:FF:000001">
    <property type="entry name" value="Phenylalanine--tRNA ligase beta subunit"/>
    <property type="match status" value="1"/>
</dbReference>
<dbReference type="FunFam" id="3.50.40.10:FF:000001">
    <property type="entry name" value="Phenylalanine--tRNA ligase beta subunit"/>
    <property type="match status" value="1"/>
</dbReference>
<dbReference type="Gene3D" id="3.30.56.10">
    <property type="match status" value="2"/>
</dbReference>
<dbReference type="Gene3D" id="3.30.930.10">
    <property type="entry name" value="Bira Bifunctional Protein, Domain 2"/>
    <property type="match status" value="1"/>
</dbReference>
<dbReference type="Gene3D" id="3.30.70.380">
    <property type="entry name" value="Ferrodoxin-fold anticodon-binding domain"/>
    <property type="match status" value="1"/>
</dbReference>
<dbReference type="Gene3D" id="2.40.50.140">
    <property type="entry name" value="Nucleic acid-binding proteins"/>
    <property type="match status" value="1"/>
</dbReference>
<dbReference type="Gene3D" id="3.50.40.10">
    <property type="entry name" value="Phenylalanyl-trna Synthetase, Chain B, domain 3"/>
    <property type="match status" value="1"/>
</dbReference>
<dbReference type="HAMAP" id="MF_00283">
    <property type="entry name" value="Phe_tRNA_synth_beta1"/>
    <property type="match status" value="1"/>
</dbReference>
<dbReference type="InterPro" id="IPR045864">
    <property type="entry name" value="aa-tRNA-synth_II/BPL/LPL"/>
</dbReference>
<dbReference type="InterPro" id="IPR005146">
    <property type="entry name" value="B3/B4_tRNA-bd"/>
</dbReference>
<dbReference type="InterPro" id="IPR009061">
    <property type="entry name" value="DNA-bd_dom_put_sf"/>
</dbReference>
<dbReference type="InterPro" id="IPR005121">
    <property type="entry name" value="Fdx_antiC-bd"/>
</dbReference>
<dbReference type="InterPro" id="IPR036690">
    <property type="entry name" value="Fdx_antiC-bd_sf"/>
</dbReference>
<dbReference type="InterPro" id="IPR012340">
    <property type="entry name" value="NA-bd_OB-fold"/>
</dbReference>
<dbReference type="InterPro" id="IPR045060">
    <property type="entry name" value="Phe-tRNA-ligase_IIc_bsu"/>
</dbReference>
<dbReference type="InterPro" id="IPR004532">
    <property type="entry name" value="Phe-tRNA-ligase_IIc_bsu_bact"/>
</dbReference>
<dbReference type="InterPro" id="IPR020825">
    <property type="entry name" value="Phe-tRNA_synthase-like_B3/B4"/>
</dbReference>
<dbReference type="InterPro" id="IPR041616">
    <property type="entry name" value="PheRS_beta_core"/>
</dbReference>
<dbReference type="InterPro" id="IPR002547">
    <property type="entry name" value="tRNA-bd_dom"/>
</dbReference>
<dbReference type="InterPro" id="IPR033714">
    <property type="entry name" value="tRNA_bind_bactPheRS"/>
</dbReference>
<dbReference type="InterPro" id="IPR005147">
    <property type="entry name" value="tRNA_synthase_B5-dom"/>
</dbReference>
<dbReference type="NCBIfam" id="TIGR00472">
    <property type="entry name" value="pheT_bact"/>
    <property type="match status" value="1"/>
</dbReference>
<dbReference type="PANTHER" id="PTHR10947:SF0">
    <property type="entry name" value="PHENYLALANINE--TRNA LIGASE BETA SUBUNIT"/>
    <property type="match status" value="1"/>
</dbReference>
<dbReference type="PANTHER" id="PTHR10947">
    <property type="entry name" value="PHENYLALANYL-TRNA SYNTHETASE BETA CHAIN AND LEUCINE-RICH REPEAT-CONTAINING PROTEIN 47"/>
    <property type="match status" value="1"/>
</dbReference>
<dbReference type="Pfam" id="PF03483">
    <property type="entry name" value="B3_4"/>
    <property type="match status" value="1"/>
</dbReference>
<dbReference type="Pfam" id="PF03484">
    <property type="entry name" value="B5"/>
    <property type="match status" value="1"/>
</dbReference>
<dbReference type="Pfam" id="PF03147">
    <property type="entry name" value="FDX-ACB"/>
    <property type="match status" value="1"/>
</dbReference>
<dbReference type="Pfam" id="PF01588">
    <property type="entry name" value="tRNA_bind"/>
    <property type="match status" value="1"/>
</dbReference>
<dbReference type="Pfam" id="PF17759">
    <property type="entry name" value="tRNA_synthFbeta"/>
    <property type="match status" value="1"/>
</dbReference>
<dbReference type="SMART" id="SM00873">
    <property type="entry name" value="B3_4"/>
    <property type="match status" value="1"/>
</dbReference>
<dbReference type="SMART" id="SM00874">
    <property type="entry name" value="B5"/>
    <property type="match status" value="1"/>
</dbReference>
<dbReference type="SMART" id="SM00896">
    <property type="entry name" value="FDX-ACB"/>
    <property type="match status" value="1"/>
</dbReference>
<dbReference type="SUPFAM" id="SSF54991">
    <property type="entry name" value="Anticodon-binding domain of PheRS"/>
    <property type="match status" value="1"/>
</dbReference>
<dbReference type="SUPFAM" id="SSF55681">
    <property type="entry name" value="Class II aaRS and biotin synthetases"/>
    <property type="match status" value="1"/>
</dbReference>
<dbReference type="SUPFAM" id="SSF50249">
    <property type="entry name" value="Nucleic acid-binding proteins"/>
    <property type="match status" value="1"/>
</dbReference>
<dbReference type="SUPFAM" id="SSF56037">
    <property type="entry name" value="PheT/TilS domain"/>
    <property type="match status" value="1"/>
</dbReference>
<dbReference type="SUPFAM" id="SSF46955">
    <property type="entry name" value="Putative DNA-binding domain"/>
    <property type="match status" value="1"/>
</dbReference>
<dbReference type="PROSITE" id="PS51483">
    <property type="entry name" value="B5"/>
    <property type="match status" value="1"/>
</dbReference>
<dbReference type="PROSITE" id="PS51447">
    <property type="entry name" value="FDX_ACB"/>
    <property type="match status" value="1"/>
</dbReference>
<dbReference type="PROSITE" id="PS50886">
    <property type="entry name" value="TRBD"/>
    <property type="match status" value="1"/>
</dbReference>
<comment type="catalytic activity">
    <reaction evidence="1">
        <text>tRNA(Phe) + L-phenylalanine + ATP = L-phenylalanyl-tRNA(Phe) + AMP + diphosphate + H(+)</text>
        <dbReference type="Rhea" id="RHEA:19413"/>
        <dbReference type="Rhea" id="RHEA-COMP:9668"/>
        <dbReference type="Rhea" id="RHEA-COMP:9699"/>
        <dbReference type="ChEBI" id="CHEBI:15378"/>
        <dbReference type="ChEBI" id="CHEBI:30616"/>
        <dbReference type="ChEBI" id="CHEBI:33019"/>
        <dbReference type="ChEBI" id="CHEBI:58095"/>
        <dbReference type="ChEBI" id="CHEBI:78442"/>
        <dbReference type="ChEBI" id="CHEBI:78531"/>
        <dbReference type="ChEBI" id="CHEBI:456215"/>
        <dbReference type="EC" id="6.1.1.20"/>
    </reaction>
</comment>
<comment type="cofactor">
    <cofactor evidence="1">
        <name>Mg(2+)</name>
        <dbReference type="ChEBI" id="CHEBI:18420"/>
    </cofactor>
    <text evidence="1">Binds 2 magnesium ions per tetramer.</text>
</comment>
<comment type="subunit">
    <text evidence="1">Tetramer of two alpha and two beta subunits.</text>
</comment>
<comment type="subcellular location">
    <subcellularLocation>
        <location evidence="1">Cytoplasm</location>
    </subcellularLocation>
</comment>
<comment type="similarity">
    <text evidence="1">Belongs to the phenylalanyl-tRNA synthetase beta subunit family. Type 1 subfamily.</text>
</comment>
<keyword id="KW-0030">Aminoacyl-tRNA synthetase</keyword>
<keyword id="KW-0067">ATP-binding</keyword>
<keyword id="KW-0963">Cytoplasm</keyword>
<keyword id="KW-0436">Ligase</keyword>
<keyword id="KW-0460">Magnesium</keyword>
<keyword id="KW-0479">Metal-binding</keyword>
<keyword id="KW-0547">Nucleotide-binding</keyword>
<keyword id="KW-0648">Protein biosynthesis</keyword>
<keyword id="KW-0694">RNA-binding</keyword>
<keyword id="KW-0820">tRNA-binding</keyword>
<proteinExistence type="inferred from homology"/>
<reference key="1">
    <citation type="journal article" date="2005" name="Science">
        <title>Genome sequence of the PCE-dechlorinating bacterium Dehalococcoides ethenogenes.</title>
        <authorList>
            <person name="Seshadri R."/>
            <person name="Adrian L."/>
            <person name="Fouts D.E."/>
            <person name="Eisen J.A."/>
            <person name="Phillippy A.M."/>
            <person name="Methe B.A."/>
            <person name="Ward N.L."/>
            <person name="Nelson W.C."/>
            <person name="DeBoy R.T."/>
            <person name="Khouri H.M."/>
            <person name="Kolonay J.F."/>
            <person name="Dodson R.J."/>
            <person name="Daugherty S.C."/>
            <person name="Brinkac L.M."/>
            <person name="Sullivan S.A."/>
            <person name="Madupu R."/>
            <person name="Nelson K.E."/>
            <person name="Kang K.H."/>
            <person name="Impraim M."/>
            <person name="Tran K."/>
            <person name="Robinson J.M."/>
            <person name="Forberger H.A."/>
            <person name="Fraser C.M."/>
            <person name="Zinder S.H."/>
            <person name="Heidelberg J.F."/>
        </authorList>
    </citation>
    <scope>NUCLEOTIDE SEQUENCE [LARGE SCALE GENOMIC DNA]</scope>
    <source>
        <strain>ATCC BAA-2266 / KCTC 15142 / 195</strain>
    </source>
</reference>
<name>SYFB_DEHM1</name>
<feature type="chain" id="PRO_0000232058" description="Phenylalanine--tRNA ligase beta subunit">
    <location>
        <begin position="1"/>
        <end position="809"/>
    </location>
</feature>
<feature type="domain" description="tRNA-binding" evidence="1">
    <location>
        <begin position="39"/>
        <end position="152"/>
    </location>
</feature>
<feature type="domain" description="B5" evidence="1">
    <location>
        <begin position="404"/>
        <end position="492"/>
    </location>
</feature>
<feature type="domain" description="FDX-ACB" evidence="1">
    <location>
        <begin position="717"/>
        <end position="808"/>
    </location>
</feature>
<feature type="binding site" evidence="1">
    <location>
        <position position="470"/>
    </location>
    <ligand>
        <name>Mg(2+)</name>
        <dbReference type="ChEBI" id="CHEBI:18420"/>
        <note>shared with alpha subunit</note>
    </ligand>
</feature>
<feature type="binding site" evidence="1">
    <location>
        <position position="476"/>
    </location>
    <ligand>
        <name>Mg(2+)</name>
        <dbReference type="ChEBI" id="CHEBI:18420"/>
        <note>shared with alpha subunit</note>
    </ligand>
</feature>
<feature type="binding site" evidence="1">
    <location>
        <position position="479"/>
    </location>
    <ligand>
        <name>Mg(2+)</name>
        <dbReference type="ChEBI" id="CHEBI:18420"/>
        <note>shared with alpha subunit</note>
    </ligand>
</feature>
<feature type="binding site" evidence="1">
    <location>
        <position position="480"/>
    </location>
    <ligand>
        <name>Mg(2+)</name>
        <dbReference type="ChEBI" id="CHEBI:18420"/>
        <note>shared with alpha subunit</note>
    </ligand>
</feature>
<gene>
    <name evidence="1" type="primary">pheT</name>
    <name type="ordered locus">DET0366</name>
</gene>
<protein>
    <recommendedName>
        <fullName evidence="1">Phenylalanine--tRNA ligase beta subunit</fullName>
        <ecNumber evidence="1">6.1.1.20</ecNumber>
    </recommendedName>
    <alternativeName>
        <fullName evidence="1">Phenylalanyl-tRNA synthetase beta subunit</fullName>
        <shortName evidence="1">PheRS</shortName>
    </alternativeName>
</protein>
<evidence type="ECO:0000255" key="1">
    <source>
        <dbReference type="HAMAP-Rule" id="MF_00283"/>
    </source>
</evidence>
<organism>
    <name type="scientific">Dehalococcoides mccartyi (strain ATCC BAA-2266 / KCTC 15142 / 195)</name>
    <name type="common">Dehalococcoides ethenogenes (strain 195)</name>
    <dbReference type="NCBI Taxonomy" id="243164"/>
    <lineage>
        <taxon>Bacteria</taxon>
        <taxon>Bacillati</taxon>
        <taxon>Chloroflexota</taxon>
        <taxon>Dehalococcoidia</taxon>
        <taxon>Dehalococcoidales</taxon>
        <taxon>Dehalococcoidaceae</taxon>
        <taxon>Dehalococcoides</taxon>
    </lineage>
</organism>
<accession>Q3Z9I7</accession>